<protein>
    <recommendedName>
        <fullName evidence="1">UPF0434 protein lpg1920</fullName>
    </recommendedName>
</protein>
<proteinExistence type="inferred from homology"/>
<feature type="chain" id="PRO_0000291106" description="UPF0434 protein lpg1920">
    <location>
        <begin position="1"/>
        <end position="59"/>
    </location>
</feature>
<dbReference type="EMBL" id="AE017354">
    <property type="protein sequence ID" value="AAU27990.1"/>
    <property type="molecule type" value="Genomic_DNA"/>
</dbReference>
<dbReference type="RefSeq" id="WP_010947637.1">
    <property type="nucleotide sequence ID" value="NC_002942.5"/>
</dbReference>
<dbReference type="RefSeq" id="YP_095937.1">
    <property type="nucleotide sequence ID" value="NC_002942.5"/>
</dbReference>
<dbReference type="SMR" id="Q5ZU87"/>
<dbReference type="STRING" id="272624.lpg1920"/>
<dbReference type="PaxDb" id="272624-lpg1920"/>
<dbReference type="KEGG" id="lpn:lpg1920"/>
<dbReference type="PATRIC" id="fig|272624.6.peg.2005"/>
<dbReference type="eggNOG" id="COG2835">
    <property type="taxonomic scope" value="Bacteria"/>
</dbReference>
<dbReference type="HOGENOM" id="CLU_155659_3_1_6"/>
<dbReference type="OrthoDB" id="9812205at2"/>
<dbReference type="Proteomes" id="UP000000609">
    <property type="component" value="Chromosome"/>
</dbReference>
<dbReference type="GO" id="GO:0005829">
    <property type="term" value="C:cytosol"/>
    <property type="evidence" value="ECO:0007669"/>
    <property type="project" value="TreeGrafter"/>
</dbReference>
<dbReference type="FunFam" id="2.20.25.10:FF:000002">
    <property type="entry name" value="UPF0434 protein YcaR"/>
    <property type="match status" value="1"/>
</dbReference>
<dbReference type="Gene3D" id="2.20.25.10">
    <property type="match status" value="1"/>
</dbReference>
<dbReference type="HAMAP" id="MF_01187">
    <property type="entry name" value="UPF0434"/>
    <property type="match status" value="1"/>
</dbReference>
<dbReference type="InterPro" id="IPR005651">
    <property type="entry name" value="Trm112-like"/>
</dbReference>
<dbReference type="PANTHER" id="PTHR33505:SF4">
    <property type="entry name" value="PROTEIN PREY, MITOCHONDRIAL"/>
    <property type="match status" value="1"/>
</dbReference>
<dbReference type="PANTHER" id="PTHR33505">
    <property type="entry name" value="ZGC:162634"/>
    <property type="match status" value="1"/>
</dbReference>
<dbReference type="Pfam" id="PF03966">
    <property type="entry name" value="Trm112p"/>
    <property type="match status" value="1"/>
</dbReference>
<dbReference type="SUPFAM" id="SSF158997">
    <property type="entry name" value="Trm112p-like"/>
    <property type="match status" value="1"/>
</dbReference>
<evidence type="ECO:0000255" key="1">
    <source>
        <dbReference type="HAMAP-Rule" id="MF_01187"/>
    </source>
</evidence>
<comment type="similarity">
    <text evidence="1">Belongs to the UPF0434 family.</text>
</comment>
<gene>
    <name type="ordered locus">lpg1920</name>
</gene>
<reference key="1">
    <citation type="journal article" date="2004" name="Science">
        <title>The genomic sequence of the accidental pathogen Legionella pneumophila.</title>
        <authorList>
            <person name="Chien M."/>
            <person name="Morozova I."/>
            <person name="Shi S."/>
            <person name="Sheng H."/>
            <person name="Chen J."/>
            <person name="Gomez S.M."/>
            <person name="Asamani G."/>
            <person name="Hill K."/>
            <person name="Nuara J."/>
            <person name="Feder M."/>
            <person name="Rineer J."/>
            <person name="Greenberg J.J."/>
            <person name="Steshenko V."/>
            <person name="Park S.H."/>
            <person name="Zhao B."/>
            <person name="Teplitskaya E."/>
            <person name="Edwards J.R."/>
            <person name="Pampou S."/>
            <person name="Georghiou A."/>
            <person name="Chou I.-C."/>
            <person name="Iannuccilli W."/>
            <person name="Ulz M.E."/>
            <person name="Kim D.H."/>
            <person name="Geringer-Sameth A."/>
            <person name="Goldsberry C."/>
            <person name="Morozov P."/>
            <person name="Fischer S.G."/>
            <person name="Segal G."/>
            <person name="Qu X."/>
            <person name="Rzhetsky A."/>
            <person name="Zhang P."/>
            <person name="Cayanis E."/>
            <person name="De Jong P.J."/>
            <person name="Ju J."/>
            <person name="Kalachikov S."/>
            <person name="Shuman H.A."/>
            <person name="Russo J.J."/>
        </authorList>
    </citation>
    <scope>NUCLEOTIDE SEQUENCE [LARGE SCALE GENOMIC DNA]</scope>
    <source>
        <strain>Philadelphia 1 / ATCC 33152 / DSM 7513</strain>
    </source>
</reference>
<keyword id="KW-1185">Reference proteome</keyword>
<organism>
    <name type="scientific">Legionella pneumophila subsp. pneumophila (strain Philadelphia 1 / ATCC 33152 / DSM 7513)</name>
    <dbReference type="NCBI Taxonomy" id="272624"/>
    <lineage>
        <taxon>Bacteria</taxon>
        <taxon>Pseudomonadati</taxon>
        <taxon>Pseudomonadota</taxon>
        <taxon>Gammaproteobacteria</taxon>
        <taxon>Legionellales</taxon>
        <taxon>Legionellaceae</taxon>
        <taxon>Legionella</taxon>
    </lineage>
</organism>
<accession>Q5ZU87</accession>
<name>Y1920_LEGPH</name>
<sequence>MDKKLLEILVCPLCKGKLLFKKQELICKFDRLAFPVRDDIPVMLEQEARLIPLEEKDKL</sequence>